<feature type="chain" id="PRO_1000145987" description="tRNA N6-adenosine threonylcarbamoyltransferase">
    <location>
        <begin position="1"/>
        <end position="340"/>
    </location>
</feature>
<feature type="binding site" evidence="1">
    <location>
        <position position="111"/>
    </location>
    <ligand>
        <name>Fe cation</name>
        <dbReference type="ChEBI" id="CHEBI:24875"/>
    </ligand>
</feature>
<feature type="binding site" evidence="1">
    <location>
        <position position="115"/>
    </location>
    <ligand>
        <name>Fe cation</name>
        <dbReference type="ChEBI" id="CHEBI:24875"/>
    </ligand>
</feature>
<feature type="binding site" evidence="1">
    <location>
        <begin position="134"/>
        <end position="138"/>
    </location>
    <ligand>
        <name>substrate</name>
    </ligand>
</feature>
<feature type="binding site" evidence="1">
    <location>
        <position position="167"/>
    </location>
    <ligand>
        <name>substrate</name>
    </ligand>
</feature>
<feature type="binding site" evidence="1">
    <location>
        <position position="180"/>
    </location>
    <ligand>
        <name>substrate</name>
    </ligand>
</feature>
<feature type="binding site" evidence="1">
    <location>
        <position position="276"/>
    </location>
    <ligand>
        <name>substrate</name>
    </ligand>
</feature>
<feature type="binding site" evidence="1">
    <location>
        <position position="304"/>
    </location>
    <ligand>
        <name>Fe cation</name>
        <dbReference type="ChEBI" id="CHEBI:24875"/>
    </ligand>
</feature>
<dbReference type="EC" id="2.3.1.234" evidence="1"/>
<dbReference type="EMBL" id="CP001173">
    <property type="protein sequence ID" value="ACI28263.1"/>
    <property type="molecule type" value="Genomic_DNA"/>
</dbReference>
<dbReference type="RefSeq" id="WP_000603646.1">
    <property type="nucleotide sequence ID" value="NC_011333.1"/>
</dbReference>
<dbReference type="SMR" id="B5Z9L4"/>
<dbReference type="KEGG" id="hpg:HPG27_1521"/>
<dbReference type="HOGENOM" id="CLU_023208_0_3_7"/>
<dbReference type="Proteomes" id="UP000001735">
    <property type="component" value="Chromosome"/>
</dbReference>
<dbReference type="GO" id="GO:0005737">
    <property type="term" value="C:cytoplasm"/>
    <property type="evidence" value="ECO:0007669"/>
    <property type="project" value="UniProtKB-SubCell"/>
</dbReference>
<dbReference type="GO" id="GO:0005506">
    <property type="term" value="F:iron ion binding"/>
    <property type="evidence" value="ECO:0007669"/>
    <property type="project" value="UniProtKB-UniRule"/>
</dbReference>
<dbReference type="GO" id="GO:0061711">
    <property type="term" value="F:N(6)-L-threonylcarbamoyladenine synthase activity"/>
    <property type="evidence" value="ECO:0007669"/>
    <property type="project" value="UniProtKB-EC"/>
</dbReference>
<dbReference type="GO" id="GO:0002949">
    <property type="term" value="P:tRNA threonylcarbamoyladenosine modification"/>
    <property type="evidence" value="ECO:0007669"/>
    <property type="project" value="UniProtKB-UniRule"/>
</dbReference>
<dbReference type="FunFam" id="3.30.420.40:FF:000359">
    <property type="entry name" value="tRNA N6-adenosine threonylcarbamoyltransferase"/>
    <property type="match status" value="1"/>
</dbReference>
<dbReference type="Gene3D" id="3.30.420.40">
    <property type="match status" value="2"/>
</dbReference>
<dbReference type="HAMAP" id="MF_01445">
    <property type="entry name" value="TsaD"/>
    <property type="match status" value="1"/>
</dbReference>
<dbReference type="InterPro" id="IPR043129">
    <property type="entry name" value="ATPase_NBD"/>
</dbReference>
<dbReference type="InterPro" id="IPR000905">
    <property type="entry name" value="Gcp-like_dom"/>
</dbReference>
<dbReference type="InterPro" id="IPR017861">
    <property type="entry name" value="KAE1/TsaD"/>
</dbReference>
<dbReference type="InterPro" id="IPR017860">
    <property type="entry name" value="Peptidase_M22_CS"/>
</dbReference>
<dbReference type="InterPro" id="IPR022450">
    <property type="entry name" value="TsaD"/>
</dbReference>
<dbReference type="NCBIfam" id="TIGR00329">
    <property type="entry name" value="gcp_kae1"/>
    <property type="match status" value="1"/>
</dbReference>
<dbReference type="NCBIfam" id="TIGR03723">
    <property type="entry name" value="T6A_TsaD_YgjD"/>
    <property type="match status" value="1"/>
</dbReference>
<dbReference type="PANTHER" id="PTHR11735">
    <property type="entry name" value="TRNA N6-ADENOSINE THREONYLCARBAMOYLTRANSFERASE"/>
    <property type="match status" value="1"/>
</dbReference>
<dbReference type="PANTHER" id="PTHR11735:SF6">
    <property type="entry name" value="TRNA N6-ADENOSINE THREONYLCARBAMOYLTRANSFERASE, MITOCHONDRIAL"/>
    <property type="match status" value="1"/>
</dbReference>
<dbReference type="Pfam" id="PF00814">
    <property type="entry name" value="TsaD"/>
    <property type="match status" value="1"/>
</dbReference>
<dbReference type="PRINTS" id="PR00789">
    <property type="entry name" value="OSIALOPTASE"/>
</dbReference>
<dbReference type="SUPFAM" id="SSF53067">
    <property type="entry name" value="Actin-like ATPase domain"/>
    <property type="match status" value="2"/>
</dbReference>
<dbReference type="PROSITE" id="PS01016">
    <property type="entry name" value="GLYCOPROTEASE"/>
    <property type="match status" value="1"/>
</dbReference>
<accession>B5Z9L4</accession>
<sequence>MILSIESSCDDSSLALTRIEDAKLIAHFKISQEKHHSSYGGVVPELASRLHAENLPLLLERIKISLNKDFSKLKAIAITNQPGLSVTLIEGLMMAKALSLSLNLPLILEDHLRGHVYSLFINEKQTCMPLSVLLVSGGHSLILEVRDYEDIKIVATSLDDSFGESFDKVSKMLDLGYPGGPIVEKLALDYAHPNEPLMFPVPLKNSPNLAFSFSGLKNAVRLEVEKNAPNLNEKIKQKIGYHFQSAAIEHLIQQTKRYFKIKRPKIFGIVGGASQNLALRKAFENLCVEFDCKLVLAPLEFCSDNAAMIGRSSLEAYQKKRFVPLEKANISPRTLLKSFE</sequence>
<gene>
    <name evidence="1" type="primary">tsaD</name>
    <name type="synonym">gcp</name>
    <name type="ordered locus">HPG27_1521</name>
</gene>
<name>TSAD_HELPG</name>
<evidence type="ECO:0000255" key="1">
    <source>
        <dbReference type="HAMAP-Rule" id="MF_01445"/>
    </source>
</evidence>
<comment type="function">
    <text evidence="1">Required for the formation of a threonylcarbamoyl group on adenosine at position 37 (t(6)A37) in tRNAs that read codons beginning with adenine. Is involved in the transfer of the threonylcarbamoyl moiety of threonylcarbamoyl-AMP (TC-AMP) to the N6 group of A37, together with TsaE and TsaB. TsaD likely plays a direct catalytic role in this reaction.</text>
</comment>
<comment type="catalytic activity">
    <reaction evidence="1">
        <text>L-threonylcarbamoyladenylate + adenosine(37) in tRNA = N(6)-L-threonylcarbamoyladenosine(37) in tRNA + AMP + H(+)</text>
        <dbReference type="Rhea" id="RHEA:37059"/>
        <dbReference type="Rhea" id="RHEA-COMP:10162"/>
        <dbReference type="Rhea" id="RHEA-COMP:10163"/>
        <dbReference type="ChEBI" id="CHEBI:15378"/>
        <dbReference type="ChEBI" id="CHEBI:73682"/>
        <dbReference type="ChEBI" id="CHEBI:74411"/>
        <dbReference type="ChEBI" id="CHEBI:74418"/>
        <dbReference type="ChEBI" id="CHEBI:456215"/>
        <dbReference type="EC" id="2.3.1.234"/>
    </reaction>
</comment>
<comment type="cofactor">
    <cofactor evidence="1">
        <name>Fe(2+)</name>
        <dbReference type="ChEBI" id="CHEBI:29033"/>
    </cofactor>
    <text evidence="1">Binds 1 Fe(2+) ion per subunit.</text>
</comment>
<comment type="subcellular location">
    <subcellularLocation>
        <location evidence="1">Cytoplasm</location>
    </subcellularLocation>
</comment>
<comment type="similarity">
    <text evidence="1">Belongs to the KAE1 / TsaD family.</text>
</comment>
<reference key="1">
    <citation type="journal article" date="2009" name="J. Bacteriol.">
        <title>The complete genome sequence of Helicobacter pylori strain G27.</title>
        <authorList>
            <person name="Baltrus D.A."/>
            <person name="Amieva M.R."/>
            <person name="Covacci A."/>
            <person name="Lowe T.M."/>
            <person name="Merrell D.S."/>
            <person name="Ottemann K.M."/>
            <person name="Stein M."/>
            <person name="Salama N.R."/>
            <person name="Guillemin K."/>
        </authorList>
    </citation>
    <scope>NUCLEOTIDE SEQUENCE [LARGE SCALE GENOMIC DNA]</scope>
    <source>
        <strain>G27</strain>
    </source>
</reference>
<keyword id="KW-0012">Acyltransferase</keyword>
<keyword id="KW-0963">Cytoplasm</keyword>
<keyword id="KW-0408">Iron</keyword>
<keyword id="KW-0479">Metal-binding</keyword>
<keyword id="KW-1185">Reference proteome</keyword>
<keyword id="KW-0808">Transferase</keyword>
<keyword id="KW-0819">tRNA processing</keyword>
<organism>
    <name type="scientific">Helicobacter pylori (strain G27)</name>
    <dbReference type="NCBI Taxonomy" id="563041"/>
    <lineage>
        <taxon>Bacteria</taxon>
        <taxon>Pseudomonadati</taxon>
        <taxon>Campylobacterota</taxon>
        <taxon>Epsilonproteobacteria</taxon>
        <taxon>Campylobacterales</taxon>
        <taxon>Helicobacteraceae</taxon>
        <taxon>Helicobacter</taxon>
    </lineage>
</organism>
<proteinExistence type="inferred from homology"/>
<protein>
    <recommendedName>
        <fullName evidence="1">tRNA N6-adenosine threonylcarbamoyltransferase</fullName>
        <ecNumber evidence="1">2.3.1.234</ecNumber>
    </recommendedName>
    <alternativeName>
        <fullName evidence="1">N6-L-threonylcarbamoyladenine synthase</fullName>
        <shortName evidence="1">t(6)A synthase</shortName>
    </alternativeName>
    <alternativeName>
        <fullName evidence="1">t(6)A37 threonylcarbamoyladenosine biosynthesis protein TsaD</fullName>
    </alternativeName>
    <alternativeName>
        <fullName evidence="1">tRNA threonylcarbamoyladenosine biosynthesis protein TsaD</fullName>
    </alternativeName>
</protein>